<accession>Q8ID39</accession>
<reference key="1">
    <citation type="journal article" date="2002" name="Nature">
        <title>Genome sequence of the human malaria parasite Plasmodium falciparum.</title>
        <authorList>
            <person name="Gardner M.J."/>
            <person name="Hall N."/>
            <person name="Fung E."/>
            <person name="White O."/>
            <person name="Berriman M."/>
            <person name="Hyman R.W."/>
            <person name="Carlton J.M."/>
            <person name="Pain A."/>
            <person name="Nelson K.E."/>
            <person name="Bowman S."/>
            <person name="Paulsen I.T."/>
            <person name="James K.D."/>
            <person name="Eisen J.A."/>
            <person name="Rutherford K.M."/>
            <person name="Salzberg S.L."/>
            <person name="Craig A."/>
            <person name="Kyes S."/>
            <person name="Chan M.-S."/>
            <person name="Nene V."/>
            <person name="Shallom S.J."/>
            <person name="Suh B."/>
            <person name="Peterson J."/>
            <person name="Angiuoli S."/>
            <person name="Pertea M."/>
            <person name="Allen J."/>
            <person name="Selengut J."/>
            <person name="Haft D."/>
            <person name="Mather M.W."/>
            <person name="Vaidya A.B."/>
            <person name="Martin D.M.A."/>
            <person name="Fairlamb A.H."/>
            <person name="Fraunholz M.J."/>
            <person name="Roos D.S."/>
            <person name="Ralph S.A."/>
            <person name="McFadden G.I."/>
            <person name="Cummings L.M."/>
            <person name="Subramanian G.M."/>
            <person name="Mungall C."/>
            <person name="Venter J.C."/>
            <person name="Carucci D.J."/>
            <person name="Hoffman S.L."/>
            <person name="Newbold C."/>
            <person name="Davis R.W."/>
            <person name="Fraser C.M."/>
            <person name="Barrell B.G."/>
        </authorList>
    </citation>
    <scope>NUCLEOTIDE SEQUENCE [LARGE SCALE GENOMIC DNA]</scope>
    <source>
        <strain>3D7</strain>
    </source>
</reference>
<reference evidence="5" key="2">
    <citation type="journal article" date="2002" name="Nature">
        <title>Sequence of Plasmodium falciparum chromosomes 1, 3-9 and 13.</title>
        <authorList>
            <person name="Hall N."/>
            <person name="Pain A."/>
            <person name="Berriman M."/>
            <person name="Churcher C.M."/>
            <person name="Harris B."/>
            <person name="Harris D."/>
            <person name="Mungall K.L."/>
            <person name="Bowman S."/>
            <person name="Atkin R."/>
            <person name="Baker S."/>
            <person name="Barron A."/>
            <person name="Brooks K."/>
            <person name="Buckee C.O."/>
            <person name="Burrows C."/>
            <person name="Cherevach I."/>
            <person name="Chillingworth C."/>
            <person name="Chillingworth T."/>
            <person name="Christodoulou Z."/>
            <person name="Clark L."/>
            <person name="Clark R."/>
            <person name="Corton C."/>
            <person name="Cronin A."/>
            <person name="Davies R.M."/>
            <person name="Davis P."/>
            <person name="Dear P."/>
            <person name="Dearden F."/>
            <person name="Doggett J."/>
            <person name="Feltwell T."/>
            <person name="Goble A."/>
            <person name="Goodhead I."/>
            <person name="Gwilliam R."/>
            <person name="Hamlin N."/>
            <person name="Hance Z."/>
            <person name="Harper D."/>
            <person name="Hauser H."/>
            <person name="Hornsby T."/>
            <person name="Holroyd S."/>
            <person name="Horrocks P."/>
            <person name="Humphray S."/>
            <person name="Jagels K."/>
            <person name="James K.D."/>
            <person name="Johnson D."/>
            <person name="Kerhornou A."/>
            <person name="Knights A."/>
            <person name="Konfortov B."/>
            <person name="Kyes S."/>
            <person name="Larke N."/>
            <person name="Lawson D."/>
            <person name="Lennard N."/>
            <person name="Line A."/>
            <person name="Maddison M."/>
            <person name="Mclean J."/>
            <person name="Mooney P."/>
            <person name="Moule S."/>
            <person name="Murphy L."/>
            <person name="Oliver K."/>
            <person name="Ormond D."/>
            <person name="Price C."/>
            <person name="Quail M.A."/>
            <person name="Rabbinowitsch E."/>
            <person name="Rajandream M.A."/>
            <person name="Rutter S."/>
            <person name="Rutherford K.M."/>
            <person name="Sanders M."/>
            <person name="Simmonds M."/>
            <person name="Seeger K."/>
            <person name="Sharp S."/>
            <person name="Smith R."/>
            <person name="Squares R."/>
            <person name="Squares S."/>
            <person name="Stevens K."/>
            <person name="Taylor K."/>
            <person name="Tivey A."/>
            <person name="Unwin L."/>
            <person name="Whitehead S."/>
            <person name="Woodward J.R."/>
            <person name="Sulston J.E."/>
            <person name="Craig A."/>
            <person name="Newbold C."/>
            <person name="Barrell B.G."/>
        </authorList>
    </citation>
    <scope>NUCLEOTIDE SEQUENCE [LARGE SCALE GENOMIC DNA]</scope>
    <source>
        <strain>3D7</strain>
    </source>
</reference>
<reference evidence="4" key="3">
    <citation type="journal article" date="2007" name="PLoS ONE">
        <title>Rapid identification of malaria vaccine candidates based on alpha-helical coiled coil protein motif.</title>
        <authorList>
            <person name="Villard V."/>
            <person name="Agak G.W."/>
            <person name="Frank G."/>
            <person name="Jafarshad A."/>
            <person name="Servis C."/>
            <person name="Nebie I."/>
            <person name="Sirima S.B."/>
            <person name="Felger I."/>
            <person name="Arevalo-Herrera M."/>
            <person name="Herrera S."/>
            <person name="Heitz F."/>
            <person name="Baecker V."/>
            <person name="Druilhe P."/>
            <person name="Kajava A.V."/>
            <person name="Corradin G."/>
        </authorList>
    </citation>
    <scope>SYNTHESIS OF 388-414</scope>
    <scope>POSSIBLE CANDIDATE MALARIA EPITOPE</scope>
</reference>
<evidence type="ECO:0000255" key="1"/>
<evidence type="ECO:0000256" key="2">
    <source>
        <dbReference type="SAM" id="MobiDB-lite"/>
    </source>
</evidence>
<evidence type="ECO:0000269" key="3">
    <source>
    </source>
</evidence>
<evidence type="ECO:0000305" key="4"/>
<evidence type="ECO:0000312" key="5">
    <source>
        <dbReference type="EMBL" id="CAD52789.1"/>
    </source>
</evidence>
<keyword id="KW-0175">Coiled coil</keyword>
<keyword id="KW-0477">Merozoite</keyword>
<keyword id="KW-1185">Reference proteome</keyword>
<organism>
    <name type="scientific">Plasmodium falciparum (isolate 3D7)</name>
    <dbReference type="NCBI Taxonomy" id="36329"/>
    <lineage>
        <taxon>Eukaryota</taxon>
        <taxon>Sar</taxon>
        <taxon>Alveolata</taxon>
        <taxon>Apicomplexa</taxon>
        <taxon>Aconoidasida</taxon>
        <taxon>Haemosporida</taxon>
        <taxon>Plasmodiidae</taxon>
        <taxon>Plasmodium</taxon>
        <taxon>Plasmodium (Laverania)</taxon>
    </lineage>
</organism>
<comment type="biotechnology">
    <text evidence="3">Possible candidate for an effective malaria vaccine as determined by epitope response in sera.</text>
</comment>
<dbReference type="EMBL" id="AL844509">
    <property type="protein sequence ID" value="CAD52789.1"/>
    <property type="molecule type" value="Genomic_DNA"/>
</dbReference>
<dbReference type="RefSeq" id="XP_001350380.1">
    <property type="nucleotide sequence ID" value="XM_001350344.1"/>
</dbReference>
<dbReference type="SMR" id="Q8ID39"/>
<dbReference type="BioGRID" id="1209167">
    <property type="interactions" value="24"/>
</dbReference>
<dbReference type="FunCoup" id="Q8ID39">
    <property type="interactions" value="1"/>
</dbReference>
<dbReference type="IntAct" id="Q8ID39">
    <property type="interactions" value="24"/>
</dbReference>
<dbReference type="STRING" id="36329.Q8ID39"/>
<dbReference type="PaxDb" id="5833-MAL13P1.336"/>
<dbReference type="EnsemblProtists" id="CAD52789">
    <property type="protein sequence ID" value="CAD52789"/>
    <property type="gene ID" value="PF3D7_1366900"/>
</dbReference>
<dbReference type="KEGG" id="pfa:PF3D7_1366900"/>
<dbReference type="VEuPathDB" id="PlasmoDB:PF3D7_1366900"/>
<dbReference type="HOGENOM" id="CLU_431813_0_0_1"/>
<dbReference type="InParanoid" id="Q8ID39"/>
<dbReference type="OMA" id="SAWKKKD"/>
<dbReference type="OrthoDB" id="378901at2759"/>
<dbReference type="Proteomes" id="UP000001450">
    <property type="component" value="Chromosome 13"/>
</dbReference>
<feature type="chain" id="PRO_0000361760" description="Uncharacterized protein MAL13P1.336">
    <location>
        <begin position="1"/>
        <end position="685"/>
    </location>
</feature>
<feature type="region of interest" description="Disordered" evidence="2">
    <location>
        <begin position="78"/>
        <end position="220"/>
    </location>
</feature>
<feature type="region of interest" description="Disordered" evidence="2">
    <location>
        <begin position="251"/>
        <end position="280"/>
    </location>
</feature>
<feature type="region of interest" description="Disordered" evidence="2">
    <location>
        <begin position="296"/>
        <end position="332"/>
    </location>
</feature>
<feature type="region of interest" description="Disordered" evidence="2">
    <location>
        <begin position="459"/>
        <end position="657"/>
    </location>
</feature>
<feature type="coiled-coil region" evidence="1">
    <location>
        <begin position="86"/>
        <end position="139"/>
    </location>
</feature>
<feature type="compositionally biased region" description="Basic and acidic residues" evidence="2">
    <location>
        <begin position="115"/>
        <end position="127"/>
    </location>
</feature>
<feature type="compositionally biased region" description="Basic and acidic residues" evidence="2">
    <location>
        <begin position="165"/>
        <end position="181"/>
    </location>
</feature>
<feature type="compositionally biased region" description="Low complexity" evidence="2">
    <location>
        <begin position="190"/>
        <end position="215"/>
    </location>
</feature>
<feature type="compositionally biased region" description="Polar residues" evidence="2">
    <location>
        <begin position="263"/>
        <end position="276"/>
    </location>
</feature>
<feature type="compositionally biased region" description="Low complexity" evidence="2">
    <location>
        <begin position="297"/>
        <end position="307"/>
    </location>
</feature>
<feature type="compositionally biased region" description="Polar residues" evidence="2">
    <location>
        <begin position="308"/>
        <end position="331"/>
    </location>
</feature>
<feature type="compositionally biased region" description="Low complexity" evidence="2">
    <location>
        <begin position="460"/>
        <end position="474"/>
    </location>
</feature>
<feature type="compositionally biased region" description="Low complexity" evidence="2">
    <location>
        <begin position="481"/>
        <end position="498"/>
    </location>
</feature>
<feature type="compositionally biased region" description="Basic and acidic residues" evidence="2">
    <location>
        <begin position="499"/>
        <end position="515"/>
    </location>
</feature>
<feature type="compositionally biased region" description="Polar residues" evidence="2">
    <location>
        <begin position="520"/>
        <end position="530"/>
    </location>
</feature>
<feature type="compositionally biased region" description="Low complexity" evidence="2">
    <location>
        <begin position="531"/>
        <end position="590"/>
    </location>
</feature>
<feature type="compositionally biased region" description="Polar residues" evidence="2">
    <location>
        <begin position="591"/>
        <end position="602"/>
    </location>
</feature>
<feature type="compositionally biased region" description="Low complexity" evidence="2">
    <location>
        <begin position="617"/>
        <end position="656"/>
    </location>
</feature>
<proteinExistence type="evidence at protein level"/>
<gene>
    <name type="ORF">MAL13P1.336</name>
</gene>
<protein>
    <recommendedName>
        <fullName>Uncharacterized protein MAL13P1.336</fullName>
    </recommendedName>
</protein>
<sequence>MEDKEVVNSENKVEVIKEEENIKKEDDVTKKVSENTEDNDISLANNVSLGKHLLIGSSLKKGISVSVRGRTMNLGMNAKQAGSAWKKKETENVEEEGEEKEKKIDDESFPDLLESTEKMKSELSKEKDKKKKQLKDGKKVEDNVNVFNSGFDRGGKTTDGNSTEFNDKKKYNMYDGNKKNDNAFNKKWYNNQQNDMNNNNQNNQNNMNNNNNNNNGHIFDTNESEEVTGYILPGFKGKHMVGFTCFLKRGTQNPVPPPPAPPLTNNQGENNIPTDNRNNENKKLMNTNIKMNQQVDNNNNNNNNNNNLGSAMNTPMNNMNKGGPRNNVNNSEHMREHSNHTVNRFAPMGQYANSKNNNMNNVHNVNNVNNVNNVNNVNNVNNMNNMNNMNNMNNNMNNMNNNMNNNMNNMNNMNSMNSMNNMNNMNSMNNMNNMNNMNNNNNNKFNENNILYKGTNYNRNVKNLGQNNNEGNTNMKHGHNNNRGQGNNNNNNNNNNFNRRNDKNDNRNFRRKDIDLEINWRNTANPTQEENNNNMNHNNNYNNNNNNNNNNNNNNNNNNNTNHGKNFRNFNNLNNMKNNNSSNNKMMGMNHMQQKGMNSSTGGHKYSFNKNDDQKNNNKMYKNNMGNANNNNNNNAVNTNFNNNNNNGNFHMNNNKSINSMDVKKTRMKDIRNLNDPPKVNNNEA</sequence>
<name>Y13P2_PLAF7</name>